<comment type="function">
    <text evidence="1">Catalyzes the condensation of carbamoyl phosphate and aspartate to form carbamoyl aspartate and inorganic phosphate, the committed step in the de novo pyrimidine nucleotide biosynthesis pathway.</text>
</comment>
<comment type="catalytic activity">
    <reaction evidence="1">
        <text>carbamoyl phosphate + L-aspartate = N-carbamoyl-L-aspartate + phosphate + H(+)</text>
        <dbReference type="Rhea" id="RHEA:20013"/>
        <dbReference type="ChEBI" id="CHEBI:15378"/>
        <dbReference type="ChEBI" id="CHEBI:29991"/>
        <dbReference type="ChEBI" id="CHEBI:32814"/>
        <dbReference type="ChEBI" id="CHEBI:43474"/>
        <dbReference type="ChEBI" id="CHEBI:58228"/>
        <dbReference type="EC" id="2.1.3.2"/>
    </reaction>
</comment>
<comment type="pathway">
    <text evidence="1">Pyrimidine metabolism; UMP biosynthesis via de novo pathway; (S)-dihydroorotate from bicarbonate: step 2/3.</text>
</comment>
<comment type="subunit">
    <text evidence="1">Heterooligomer of catalytic and regulatory chains.</text>
</comment>
<comment type="similarity">
    <text evidence="1">Belongs to the aspartate/ornithine carbamoyltransferase superfamily. ATCase family.</text>
</comment>
<proteinExistence type="inferred from homology"/>
<accession>A3MY52</accession>
<gene>
    <name evidence="1" type="primary">pyrB</name>
    <name type="ordered locus">Pcal_2154</name>
</gene>
<name>PYRB_PYRCJ</name>
<evidence type="ECO:0000255" key="1">
    <source>
        <dbReference type="HAMAP-Rule" id="MF_00001"/>
    </source>
</evidence>
<feature type="chain" id="PRO_0000321191" description="Aspartate carbamoyltransferase catalytic subunit">
    <location>
        <begin position="1"/>
        <end position="305"/>
    </location>
</feature>
<feature type="binding site" evidence="1">
    <location>
        <position position="54"/>
    </location>
    <ligand>
        <name>carbamoyl phosphate</name>
        <dbReference type="ChEBI" id="CHEBI:58228"/>
    </ligand>
</feature>
<feature type="binding site" evidence="1">
    <location>
        <position position="55"/>
    </location>
    <ligand>
        <name>carbamoyl phosphate</name>
        <dbReference type="ChEBI" id="CHEBI:58228"/>
    </ligand>
</feature>
<feature type="binding site" evidence="1">
    <location>
        <position position="83"/>
    </location>
    <ligand>
        <name>L-aspartate</name>
        <dbReference type="ChEBI" id="CHEBI:29991"/>
    </ligand>
</feature>
<feature type="binding site" evidence="1">
    <location>
        <position position="104"/>
    </location>
    <ligand>
        <name>carbamoyl phosphate</name>
        <dbReference type="ChEBI" id="CHEBI:58228"/>
    </ligand>
</feature>
<feature type="binding site" evidence="1">
    <location>
        <position position="132"/>
    </location>
    <ligand>
        <name>carbamoyl phosphate</name>
        <dbReference type="ChEBI" id="CHEBI:58228"/>
    </ligand>
</feature>
<feature type="binding site" evidence="1">
    <location>
        <position position="135"/>
    </location>
    <ligand>
        <name>carbamoyl phosphate</name>
        <dbReference type="ChEBI" id="CHEBI:58228"/>
    </ligand>
</feature>
<feature type="binding site" evidence="1">
    <location>
        <position position="165"/>
    </location>
    <ligand>
        <name>L-aspartate</name>
        <dbReference type="ChEBI" id="CHEBI:29991"/>
    </ligand>
</feature>
<feature type="binding site" evidence="1">
    <location>
        <position position="226"/>
    </location>
    <ligand>
        <name>L-aspartate</name>
        <dbReference type="ChEBI" id="CHEBI:29991"/>
    </ligand>
</feature>
<feature type="binding site" evidence="1">
    <location>
        <position position="265"/>
    </location>
    <ligand>
        <name>carbamoyl phosphate</name>
        <dbReference type="ChEBI" id="CHEBI:58228"/>
    </ligand>
</feature>
<feature type="binding site" evidence="1">
    <location>
        <position position="266"/>
    </location>
    <ligand>
        <name>carbamoyl phosphate</name>
        <dbReference type="ChEBI" id="CHEBI:58228"/>
    </ligand>
</feature>
<organism>
    <name type="scientific">Pyrobaculum calidifontis (strain DSM 21063 / JCM 11548 / VA1)</name>
    <dbReference type="NCBI Taxonomy" id="410359"/>
    <lineage>
        <taxon>Archaea</taxon>
        <taxon>Thermoproteota</taxon>
        <taxon>Thermoprotei</taxon>
        <taxon>Thermoproteales</taxon>
        <taxon>Thermoproteaceae</taxon>
        <taxon>Pyrobaculum</taxon>
    </lineage>
</organism>
<dbReference type="EC" id="2.1.3.2" evidence="1"/>
<dbReference type="EMBL" id="CP000561">
    <property type="protein sequence ID" value="ABO09569.1"/>
    <property type="molecule type" value="Genomic_DNA"/>
</dbReference>
<dbReference type="RefSeq" id="WP_011850827.1">
    <property type="nucleotide sequence ID" value="NC_009073.1"/>
</dbReference>
<dbReference type="SMR" id="A3MY52"/>
<dbReference type="STRING" id="410359.Pcal_2154"/>
<dbReference type="GeneID" id="4908397"/>
<dbReference type="KEGG" id="pcl:Pcal_2154"/>
<dbReference type="eggNOG" id="arCOG00911">
    <property type="taxonomic scope" value="Archaea"/>
</dbReference>
<dbReference type="HOGENOM" id="CLU_043846_1_2_2"/>
<dbReference type="OrthoDB" id="7792at2157"/>
<dbReference type="UniPathway" id="UPA00070">
    <property type="reaction ID" value="UER00116"/>
</dbReference>
<dbReference type="Proteomes" id="UP000001431">
    <property type="component" value="Chromosome"/>
</dbReference>
<dbReference type="GO" id="GO:0016597">
    <property type="term" value="F:amino acid binding"/>
    <property type="evidence" value="ECO:0007669"/>
    <property type="project" value="InterPro"/>
</dbReference>
<dbReference type="GO" id="GO:0004070">
    <property type="term" value="F:aspartate carbamoyltransferase activity"/>
    <property type="evidence" value="ECO:0007669"/>
    <property type="project" value="UniProtKB-UniRule"/>
</dbReference>
<dbReference type="GO" id="GO:0006207">
    <property type="term" value="P:'de novo' pyrimidine nucleobase biosynthetic process"/>
    <property type="evidence" value="ECO:0007669"/>
    <property type="project" value="InterPro"/>
</dbReference>
<dbReference type="GO" id="GO:0044205">
    <property type="term" value="P:'de novo' UMP biosynthetic process"/>
    <property type="evidence" value="ECO:0007669"/>
    <property type="project" value="UniProtKB-UniRule"/>
</dbReference>
<dbReference type="GO" id="GO:0006520">
    <property type="term" value="P:amino acid metabolic process"/>
    <property type="evidence" value="ECO:0007669"/>
    <property type="project" value="InterPro"/>
</dbReference>
<dbReference type="FunFam" id="3.40.50.1370:FF:000001">
    <property type="entry name" value="Aspartate carbamoyltransferase"/>
    <property type="match status" value="1"/>
</dbReference>
<dbReference type="FunFam" id="3.40.50.1370:FF:000002">
    <property type="entry name" value="Aspartate carbamoyltransferase 2"/>
    <property type="match status" value="1"/>
</dbReference>
<dbReference type="Gene3D" id="3.40.50.1370">
    <property type="entry name" value="Aspartate/ornithine carbamoyltransferase"/>
    <property type="match status" value="2"/>
</dbReference>
<dbReference type="HAMAP" id="MF_00001">
    <property type="entry name" value="Asp_carb_tr"/>
    <property type="match status" value="1"/>
</dbReference>
<dbReference type="InterPro" id="IPR006132">
    <property type="entry name" value="Asp/Orn_carbamoyltranf_P-bd"/>
</dbReference>
<dbReference type="InterPro" id="IPR006130">
    <property type="entry name" value="Asp/Orn_carbamoylTrfase"/>
</dbReference>
<dbReference type="InterPro" id="IPR036901">
    <property type="entry name" value="Asp/Orn_carbamoylTrfase_sf"/>
</dbReference>
<dbReference type="InterPro" id="IPR002082">
    <property type="entry name" value="Asp_carbamoyltransf"/>
</dbReference>
<dbReference type="InterPro" id="IPR006131">
    <property type="entry name" value="Asp_carbamoyltransf_Asp/Orn-bd"/>
</dbReference>
<dbReference type="NCBIfam" id="TIGR00670">
    <property type="entry name" value="asp_carb_tr"/>
    <property type="match status" value="1"/>
</dbReference>
<dbReference type="NCBIfam" id="NF002032">
    <property type="entry name" value="PRK00856.1"/>
    <property type="match status" value="1"/>
</dbReference>
<dbReference type="PANTHER" id="PTHR45753:SF6">
    <property type="entry name" value="ASPARTATE CARBAMOYLTRANSFERASE"/>
    <property type="match status" value="1"/>
</dbReference>
<dbReference type="PANTHER" id="PTHR45753">
    <property type="entry name" value="ORNITHINE CARBAMOYLTRANSFERASE, MITOCHONDRIAL"/>
    <property type="match status" value="1"/>
</dbReference>
<dbReference type="Pfam" id="PF00185">
    <property type="entry name" value="OTCace"/>
    <property type="match status" value="1"/>
</dbReference>
<dbReference type="Pfam" id="PF02729">
    <property type="entry name" value="OTCace_N"/>
    <property type="match status" value="1"/>
</dbReference>
<dbReference type="PRINTS" id="PR00100">
    <property type="entry name" value="AOTCASE"/>
</dbReference>
<dbReference type="PRINTS" id="PR00101">
    <property type="entry name" value="ATCASE"/>
</dbReference>
<dbReference type="SUPFAM" id="SSF53671">
    <property type="entry name" value="Aspartate/ornithine carbamoyltransferase"/>
    <property type="match status" value="1"/>
</dbReference>
<dbReference type="PROSITE" id="PS00097">
    <property type="entry name" value="CARBAMOYLTRANSFERASE"/>
    <property type="match status" value="1"/>
</dbReference>
<sequence>MWFGRDVISARDFSREDLYELFEMAKYMEKFAKSRVDFLRGKVMATAFFEPSTRTRLSFEVAMKRLGGDVIGFGSAEGTSVEKGETLADTIRMLDAYADVIVIRHKYEGAAKLAAEVAESPVVNGGDGAYNHPTQAMLDVYTIWREFGHVDGLNVGLMGDLRNARTINSLVETLANFNVRLYFISPEFLRPRAETVDYARDKGVKMSFHTNVEEVVHELDVLYVVRIQKERFLDPLEYERVKGSYRVTLELLKNAKRGLIVLHPLPRVDEIDHRIDSTPHAKYFIQAALGVPLRMALIYLILSPP</sequence>
<protein>
    <recommendedName>
        <fullName evidence="1">Aspartate carbamoyltransferase catalytic subunit</fullName>
        <ecNumber evidence="1">2.1.3.2</ecNumber>
    </recommendedName>
    <alternativeName>
        <fullName evidence="1">Aspartate transcarbamylase</fullName>
        <shortName evidence="1">ATCase</shortName>
    </alternativeName>
</protein>
<reference key="1">
    <citation type="submission" date="2007-02" db="EMBL/GenBank/DDBJ databases">
        <title>Complete sequence of Pyrobaculum calidifontis JCM 11548.</title>
        <authorList>
            <consortium name="US DOE Joint Genome Institute"/>
            <person name="Copeland A."/>
            <person name="Lucas S."/>
            <person name="Lapidus A."/>
            <person name="Barry K."/>
            <person name="Glavina del Rio T."/>
            <person name="Dalin E."/>
            <person name="Tice H."/>
            <person name="Pitluck S."/>
            <person name="Chain P."/>
            <person name="Malfatti S."/>
            <person name="Shin M."/>
            <person name="Vergez L."/>
            <person name="Schmutz J."/>
            <person name="Larimer F."/>
            <person name="Land M."/>
            <person name="Hauser L."/>
            <person name="Kyrpides N."/>
            <person name="Mikhailova N."/>
            <person name="Cozen A.E."/>
            <person name="Fitz-Gibbon S.T."/>
            <person name="House C.H."/>
            <person name="Saltikov C."/>
            <person name="Lowe T.M."/>
            <person name="Richardson P."/>
        </authorList>
    </citation>
    <scope>NUCLEOTIDE SEQUENCE [LARGE SCALE GENOMIC DNA]</scope>
    <source>
        <strain>DSM 21063 / JCM 11548 / VA1</strain>
    </source>
</reference>
<keyword id="KW-0665">Pyrimidine biosynthesis</keyword>
<keyword id="KW-0808">Transferase</keyword>